<dbReference type="EC" id="2.3.1.-" evidence="6"/>
<dbReference type="EMBL" id="FR718882">
    <property type="protein sequence ID" value="CBX87036.1"/>
    <property type="molecule type" value="Genomic_DNA"/>
</dbReference>
<dbReference type="RefSeq" id="XP_001545614.1">
    <property type="nucleotide sequence ID" value="XM_001545564.1"/>
</dbReference>
<dbReference type="SMR" id="A6SSW1"/>
<dbReference type="KEGG" id="bfu:BCIN_01g00110"/>
<dbReference type="OMA" id="RMPRGQF"/>
<dbReference type="OrthoDB" id="1862401at2759"/>
<dbReference type="GO" id="GO:0016747">
    <property type="term" value="F:acyltransferase activity, transferring groups other than amino-acyl groups"/>
    <property type="evidence" value="ECO:0007669"/>
    <property type="project" value="TreeGrafter"/>
</dbReference>
<dbReference type="Gene3D" id="3.30.559.10">
    <property type="entry name" value="Chloramphenicol acetyltransferase-like domain"/>
    <property type="match status" value="2"/>
</dbReference>
<dbReference type="InterPro" id="IPR023213">
    <property type="entry name" value="CAT-like_dom_sf"/>
</dbReference>
<dbReference type="InterPro" id="IPR050317">
    <property type="entry name" value="Plant_Fungal_Acyltransferase"/>
</dbReference>
<dbReference type="InterPro" id="IPR054710">
    <property type="entry name" value="Tri101-like_N"/>
</dbReference>
<dbReference type="PANTHER" id="PTHR31642:SF315">
    <property type="entry name" value="ACYLTRANSFERASE EASC"/>
    <property type="match status" value="1"/>
</dbReference>
<dbReference type="PANTHER" id="PTHR31642">
    <property type="entry name" value="TRICHOTHECENE 3-O-ACETYLTRANSFERASE"/>
    <property type="match status" value="1"/>
</dbReference>
<dbReference type="Pfam" id="PF22664">
    <property type="entry name" value="TRI-like_N"/>
    <property type="match status" value="1"/>
</dbReference>
<name>BOA11_BOTFB</name>
<gene>
    <name evidence="4" type="primary">BOA11</name>
</gene>
<feature type="chain" id="PRO_0000444647" description="Acyltransferase BOA11">
    <location>
        <begin position="1"/>
        <end position="470"/>
    </location>
</feature>
<feature type="active site" description="Proton acceptor" evidence="1">
    <location>
        <position position="156"/>
    </location>
</feature>
<sequence length="470" mass="52718">MASATKTLITELTPLDHLMPRTYVIGMNYIWPISRRSNIEDIHKHLKRGLEQTIKEIPFLGGSVVPTGSPGKFCIETLPGDFEGNQLIFNDLRTGSGNSWPNSYKNVRKARFPSTLFTDDCLSPVKGYMTRERLPVIAAQANFIDGGLILHLSVLHTACDVLAWNNILSILSKNVKASWPTEAEVSLNDDLQDYKVLPSFLDRSPLMRGNLNVERMDVREYKLQLANSKLEDPRNHLINPPPKSITEMENALFCISNSKLGELRDSISAEGSATSWLTVNDALAALMWCCVNRARISNGSQKLLRGNLSVAYDGRTVLDPPLPKRFMGNSALGFPITLDIHPKSVFEAALAISESRNDFNDKHIRDIIGFLDGLGDITQERVSYAKTLNPILVISNLKDMGFYEQDWGGSLGFPDALRMANPFLDYIPRVVPMPAQRNGNVYLIVWIEKSAAKRLREDETWNKWITPVFE</sequence>
<keyword id="KW-0012">Acyltransferase</keyword>
<keyword id="KW-0808">Transferase</keyword>
<keyword id="KW-0843">Virulence</keyword>
<evidence type="ECO:0000250" key="1">
    <source>
        <dbReference type="UniProtKB" id="Q70PR7"/>
    </source>
</evidence>
<evidence type="ECO:0000269" key="2">
    <source>
    </source>
</evidence>
<evidence type="ECO:0000269" key="3">
    <source>
    </source>
</evidence>
<evidence type="ECO:0000303" key="4">
    <source>
    </source>
</evidence>
<evidence type="ECO:0000305" key="5"/>
<evidence type="ECO:0000305" key="6">
    <source>
    </source>
</evidence>
<evidence type="ECO:0000305" key="7">
    <source>
    </source>
</evidence>
<proteinExistence type="evidence at transcript level"/>
<organism>
    <name type="scientific">Botryotinia fuckeliana (strain B05.10)</name>
    <name type="common">Noble rot fungus</name>
    <name type="synonym">Botrytis cinerea</name>
    <dbReference type="NCBI Taxonomy" id="332648"/>
    <lineage>
        <taxon>Eukaryota</taxon>
        <taxon>Fungi</taxon>
        <taxon>Dikarya</taxon>
        <taxon>Ascomycota</taxon>
        <taxon>Pezizomycotina</taxon>
        <taxon>Leotiomycetes</taxon>
        <taxon>Helotiales</taxon>
        <taxon>Sclerotiniaceae</taxon>
        <taxon>Botrytis</taxon>
    </lineage>
</organism>
<comment type="function">
    <text evidence="2 3 7">Acyltransferase; part of the gene cluster B that mediates the biosynthesis of botcinic acid and its botcinin derivatives, acetate-derived polyketides that contribute to virulence when combined with the sesquiterpene botrydial (PubMed:21722295). Botcinic acid and its derivatives have been shown to induce chlorosis and necrosis during host plant infection, but also have antifungal activities (PubMed:21722295). Two polyketide synthases, BOA6 and BOA9, are involved in the biosynthesis of botcinins. BOA6 mediates the formation of the per-methylated tetraketide core by condensation of four units of malonyl-CoA with one unit of acetyl-CoA, which would be methylated in activated methylene groups to yield a bicyclic acid intermediate that could then either be converted to botrylactone derivatives or lose the starter acetate unit through a retro-Claisen type C-C bond cleavage to yield botcinin derivatives (PubMed:23203902). The second polyketide synthase, BOA9, is probably required for the biosynthesis of the tetraketide side chain of botcinins (Probable). The methyltransferase (MT) domain within BOA6 is probably responsible for the incorporation of four methyl groups (Probable). The trans-enoyl reductase BOA5 might take over the enoyl reductase function of BOA6 that misses an ER domain (Probable). The monooxygenases BOA2, BOA3 and BOA4 might be involved in further hydroxylations at C4, C5 and C8, whereas BOA7, close to BOA9, could potentially be involved in the hydroxylation at C4 in the side chain of botcinins (Probable).</text>
</comment>
<comment type="pathway">
    <text evidence="6">Polyketide biosynthesis.</text>
</comment>
<comment type="induction">
    <text evidence="2">Expression of the botcinic acid clusters genes BOA1-13 and BOA17 is coregulated by BCG1 during both in vitro and in planta growth.</text>
</comment>
<comment type="similarity">
    <text evidence="5">Belongs to the plant acyltransferase family.</text>
</comment>
<reference key="1">
    <citation type="journal article" date="2011" name="Mol. Plant Pathol.">
        <title>The Botrytis cinerea phytotoxin botcinic acid requires two polyketide synthases for production and has a redundant role in virulence with botrydial.</title>
        <authorList>
            <person name="Dalmais B."/>
            <person name="Schumacher J."/>
            <person name="Moraga J."/>
            <person name="Le Pecheur P."/>
            <person name="Tudzynski B."/>
            <person name="Collado I.G."/>
            <person name="Viaud M."/>
        </authorList>
    </citation>
    <scope>NUCLEOTIDE SEQUENCE [GENOMIC DNA]</scope>
    <scope>FUNCTION</scope>
    <scope>INDUCTION</scope>
    <scope>PATHWAY</scope>
    <source>
        <strain>B05.10</strain>
    </source>
</reference>
<reference key="2">
    <citation type="journal article" date="2013" name="ChemBioChem">
        <title>A shared biosynthetic pathway for botcinins and botrylactones revealed through gene deletions.</title>
        <authorList>
            <person name="Massaroli M."/>
            <person name="Moraga J."/>
            <person name="Bastos Borges K."/>
            <person name="Ramirez-Fernandez J."/>
            <person name="Viaud M."/>
            <person name="Gonzalez Collado I."/>
            <person name="Duran-Patron R."/>
            <person name="Hernandez-Galan R."/>
        </authorList>
    </citation>
    <scope>FUNCTION</scope>
</reference>
<protein>
    <recommendedName>
        <fullName evidence="4">Acyltransferase BOA11</fullName>
        <ecNumber evidence="6">2.3.1.-</ecNumber>
    </recommendedName>
    <alternativeName>
        <fullName evidence="4">Botcinic acid biosynthesis cluster B protein 11</fullName>
    </alternativeName>
</protein>
<accession>A6SSW1</accession>